<sequence>MVYSYTEKKRIRKDFGKRPKVLDIPYLLSIQLNSFKKFIQPDLSGQHGLEAAFRSVFPIRGYNGNSELQYVSYRLGETIFDVKECQIRGATYSAPLRVKLRLVIYERDILEATVKDIKEQEVYMGEIPLMTNNGTFIINGTERVVVSQLHRSPGVFFDSDKGKTHSSGKVLYNARIIPYRGSWLDFEFDPKDNLFVRIDRRRKLPVSIILRALNYNTEEILNIFFEKNIFKIENNKIVLELVPERLRGETASFNIKKNGIIYVEKGRRITAKHIQELKNNKIKSITVPVEYILGRIVSKNYVDKKTGETIISSNTELSLEILEKLKKSGFYSIETLFTNDLDHGPYISETLRIDSSNDRMSALIEIYRVMRPGEPPTKEATENLFENLFFSEDRYDLSTVGRMKFNRSLLREETKGSSTLNKEDIIDVIKKIIDIRNGKGEVDDIDHLGNRRVRSVGEMAENQFRIGLVRVERAVKERLSIGDLDTLMPQDMINAKPISAAVKEFFGSSQLSQFMDQNNPLSEITHKRRISALGLGGLTRERAGFEVRDVHPTHYGRVCPIETPEGPNIGLINSLSVYAQTNSYGFLETPYRKVCNGLVSEEIHYLSAIEEGNYIIAQANTNIDKTGFFTDDLVTCRHKGESSLFNRNQVNYMDVSTQQIVSVGASLIPFLEHDDANRALMGANMQRQAVPTLKTDKPLIGTGMERAVAVDSGVTAVAKRSGVVQYVDASRIVIKVDEKEMYSREAGIDIYNLTKYTRSNQNTCINQQPCVNLGEKIKKGDVLADGPSTDLGELALGQNMRVAFMPWNGYNFEDSILVSERVVQEDRFTTIHIQELSCISRDTKLGAEEISSDIPNVGEAALSKLDESGIVYIGAEVTGGDILVGKVTPKGETQLTPEEKLLRAIFGEKASDVKDSSLRVPNGVSGTVIDVQIFTRDGVKKDKRALEIEDMQLKKIKQDLTEEFKIFESSLFTHIKKTFISLDIETKQLDTLPFEKWFSVDIKQKDKKKEIEKLAKQHHELKEEFNKKIEIKRQKITQGDDLAPGVLKIVKVYLAVKRQIQPGDKMAGRHGNKGVISKINPVEDMPYDENGIPVDIVLNPLGVPSRMNIGQILETHLGMAAKGIGDKINHMLKTQEKISNLRKFIQKAFDLGDNLRQKVNLDTFSNEEILRLAKNLKNGIPISTPVFDGAQENEIKQMLKFAGLPTSGQIILFDGRTGEKFERPVTVGYMYMLKLNHLVDDKMHARSTGSYSLVTQQPLGGKAQFGGQRFGEMEVWALEAYGASYTLQEMLTVKSDDVNGRTKMYKNIVDGNHQMEPGMPESFNVLLKEIRSLGINIELESE</sequence>
<name>RPOB_BUCAT</name>
<gene>
    <name evidence="1" type="primary">rpoB</name>
    <name type="ordered locus">BUAPTUC7_034</name>
</gene>
<evidence type="ECO:0000255" key="1">
    <source>
        <dbReference type="HAMAP-Rule" id="MF_01321"/>
    </source>
</evidence>
<keyword id="KW-0240">DNA-directed RNA polymerase</keyword>
<keyword id="KW-0548">Nucleotidyltransferase</keyword>
<keyword id="KW-0804">Transcription</keyword>
<keyword id="KW-0808">Transferase</keyword>
<accession>B8D6V0</accession>
<feature type="chain" id="PRO_1000165795" description="DNA-directed RNA polymerase subunit beta">
    <location>
        <begin position="1"/>
        <end position="1342"/>
    </location>
</feature>
<organism>
    <name type="scientific">Buchnera aphidicola subsp. Acyrthosiphon pisum (strain Tuc7)</name>
    <dbReference type="NCBI Taxonomy" id="561501"/>
    <lineage>
        <taxon>Bacteria</taxon>
        <taxon>Pseudomonadati</taxon>
        <taxon>Pseudomonadota</taxon>
        <taxon>Gammaproteobacteria</taxon>
        <taxon>Enterobacterales</taxon>
        <taxon>Erwiniaceae</taxon>
        <taxon>Buchnera</taxon>
    </lineage>
</organism>
<protein>
    <recommendedName>
        <fullName evidence="1">DNA-directed RNA polymerase subunit beta</fullName>
        <shortName evidence="1">RNAP subunit beta</shortName>
        <ecNumber evidence="1">2.7.7.6</ecNumber>
    </recommendedName>
    <alternativeName>
        <fullName evidence="1">RNA polymerase subunit beta</fullName>
    </alternativeName>
    <alternativeName>
        <fullName evidence="1">Transcriptase subunit beta</fullName>
    </alternativeName>
</protein>
<dbReference type="EC" id="2.7.7.6" evidence="1"/>
<dbReference type="EMBL" id="CP001158">
    <property type="protein sequence ID" value="ACL29865.1"/>
    <property type="molecule type" value="Genomic_DNA"/>
</dbReference>
<dbReference type="RefSeq" id="WP_012619406.1">
    <property type="nucleotide sequence ID" value="NC_011834.1"/>
</dbReference>
<dbReference type="SMR" id="B8D6V0"/>
<dbReference type="KEGG" id="bau:BUAPTUC7_034"/>
<dbReference type="HOGENOM" id="CLU_000524_4_3_6"/>
<dbReference type="GO" id="GO:0000428">
    <property type="term" value="C:DNA-directed RNA polymerase complex"/>
    <property type="evidence" value="ECO:0007669"/>
    <property type="project" value="UniProtKB-KW"/>
</dbReference>
<dbReference type="GO" id="GO:0003677">
    <property type="term" value="F:DNA binding"/>
    <property type="evidence" value="ECO:0007669"/>
    <property type="project" value="UniProtKB-UniRule"/>
</dbReference>
<dbReference type="GO" id="GO:0003899">
    <property type="term" value="F:DNA-directed RNA polymerase activity"/>
    <property type="evidence" value="ECO:0007669"/>
    <property type="project" value="UniProtKB-UniRule"/>
</dbReference>
<dbReference type="GO" id="GO:0032549">
    <property type="term" value="F:ribonucleoside binding"/>
    <property type="evidence" value="ECO:0007669"/>
    <property type="project" value="InterPro"/>
</dbReference>
<dbReference type="GO" id="GO:0006351">
    <property type="term" value="P:DNA-templated transcription"/>
    <property type="evidence" value="ECO:0007669"/>
    <property type="project" value="UniProtKB-UniRule"/>
</dbReference>
<dbReference type="CDD" id="cd00653">
    <property type="entry name" value="RNA_pol_B_RPB2"/>
    <property type="match status" value="1"/>
</dbReference>
<dbReference type="FunFam" id="2.30.150.10:FF:000001">
    <property type="entry name" value="DNA-directed RNA polymerase subunit beta"/>
    <property type="match status" value="1"/>
</dbReference>
<dbReference type="FunFam" id="2.40.270.10:FF:000003">
    <property type="entry name" value="DNA-directed RNA polymerase subunit beta"/>
    <property type="match status" value="1"/>
</dbReference>
<dbReference type="FunFam" id="2.40.270.10:FF:000004">
    <property type="entry name" value="DNA-directed RNA polymerase subunit beta"/>
    <property type="match status" value="1"/>
</dbReference>
<dbReference type="FunFam" id="2.40.50.100:FF:000006">
    <property type="entry name" value="DNA-directed RNA polymerase subunit beta"/>
    <property type="match status" value="1"/>
</dbReference>
<dbReference type="FunFam" id="2.40.50.150:FF:000001">
    <property type="entry name" value="DNA-directed RNA polymerase subunit beta"/>
    <property type="match status" value="1"/>
</dbReference>
<dbReference type="FunFam" id="3.90.1100.10:FF:000002">
    <property type="entry name" value="DNA-directed RNA polymerase subunit beta"/>
    <property type="match status" value="1"/>
</dbReference>
<dbReference type="FunFam" id="3.90.1110.10:FF:000001">
    <property type="entry name" value="DNA-directed RNA polymerase subunit beta"/>
    <property type="match status" value="1"/>
</dbReference>
<dbReference type="FunFam" id="3.90.1110.10:FF:000004">
    <property type="entry name" value="DNA-directed RNA polymerase subunit beta"/>
    <property type="match status" value="1"/>
</dbReference>
<dbReference type="FunFam" id="3.90.1800.10:FF:000001">
    <property type="entry name" value="DNA-directed RNA polymerase subunit beta"/>
    <property type="match status" value="1"/>
</dbReference>
<dbReference type="Gene3D" id="2.40.50.100">
    <property type="match status" value="1"/>
</dbReference>
<dbReference type="Gene3D" id="2.40.50.150">
    <property type="match status" value="1"/>
</dbReference>
<dbReference type="Gene3D" id="3.90.1100.10">
    <property type="match status" value="2"/>
</dbReference>
<dbReference type="Gene3D" id="2.30.150.10">
    <property type="entry name" value="DNA-directed RNA polymerase, beta subunit, external 1 domain"/>
    <property type="match status" value="1"/>
</dbReference>
<dbReference type="Gene3D" id="2.40.270.10">
    <property type="entry name" value="DNA-directed RNA polymerase, subunit 2, domain 6"/>
    <property type="match status" value="2"/>
</dbReference>
<dbReference type="Gene3D" id="3.90.1800.10">
    <property type="entry name" value="RNA polymerase alpha subunit dimerisation domain"/>
    <property type="match status" value="1"/>
</dbReference>
<dbReference type="Gene3D" id="3.90.1110.10">
    <property type="entry name" value="RNA polymerase Rpb2, domain 2"/>
    <property type="match status" value="2"/>
</dbReference>
<dbReference type="HAMAP" id="MF_01321">
    <property type="entry name" value="RNApol_bact_RpoB"/>
    <property type="match status" value="1"/>
</dbReference>
<dbReference type="InterPro" id="IPR042107">
    <property type="entry name" value="DNA-dir_RNA_pol_bsu_ext_1_sf"/>
</dbReference>
<dbReference type="InterPro" id="IPR019462">
    <property type="entry name" value="DNA-dir_RNA_pol_bsu_external_1"/>
</dbReference>
<dbReference type="InterPro" id="IPR015712">
    <property type="entry name" value="DNA-dir_RNA_pol_su2"/>
</dbReference>
<dbReference type="InterPro" id="IPR007120">
    <property type="entry name" value="DNA-dir_RNAP_su2_dom"/>
</dbReference>
<dbReference type="InterPro" id="IPR037033">
    <property type="entry name" value="DNA-dir_RNAP_su2_hyb_sf"/>
</dbReference>
<dbReference type="InterPro" id="IPR010243">
    <property type="entry name" value="RNA_pol_bsu_bac"/>
</dbReference>
<dbReference type="InterPro" id="IPR007121">
    <property type="entry name" value="RNA_pol_bsu_CS"/>
</dbReference>
<dbReference type="InterPro" id="IPR007644">
    <property type="entry name" value="RNA_pol_bsu_protrusion"/>
</dbReference>
<dbReference type="InterPro" id="IPR007642">
    <property type="entry name" value="RNA_pol_Rpb2_2"/>
</dbReference>
<dbReference type="InterPro" id="IPR037034">
    <property type="entry name" value="RNA_pol_Rpb2_2_sf"/>
</dbReference>
<dbReference type="InterPro" id="IPR007645">
    <property type="entry name" value="RNA_pol_Rpb2_3"/>
</dbReference>
<dbReference type="InterPro" id="IPR007641">
    <property type="entry name" value="RNA_pol_Rpb2_7"/>
</dbReference>
<dbReference type="InterPro" id="IPR014724">
    <property type="entry name" value="RNA_pol_RPB2_OB-fold"/>
</dbReference>
<dbReference type="NCBIfam" id="NF001616">
    <property type="entry name" value="PRK00405.1"/>
    <property type="match status" value="1"/>
</dbReference>
<dbReference type="NCBIfam" id="TIGR02013">
    <property type="entry name" value="rpoB"/>
    <property type="match status" value="1"/>
</dbReference>
<dbReference type="PANTHER" id="PTHR20856">
    <property type="entry name" value="DNA-DIRECTED RNA POLYMERASE I SUBUNIT 2"/>
    <property type="match status" value="1"/>
</dbReference>
<dbReference type="Pfam" id="PF04563">
    <property type="entry name" value="RNA_pol_Rpb2_1"/>
    <property type="match status" value="1"/>
</dbReference>
<dbReference type="Pfam" id="PF04561">
    <property type="entry name" value="RNA_pol_Rpb2_2"/>
    <property type="match status" value="2"/>
</dbReference>
<dbReference type="Pfam" id="PF04565">
    <property type="entry name" value="RNA_pol_Rpb2_3"/>
    <property type="match status" value="1"/>
</dbReference>
<dbReference type="Pfam" id="PF10385">
    <property type="entry name" value="RNA_pol_Rpb2_45"/>
    <property type="match status" value="1"/>
</dbReference>
<dbReference type="Pfam" id="PF00562">
    <property type="entry name" value="RNA_pol_Rpb2_6"/>
    <property type="match status" value="1"/>
</dbReference>
<dbReference type="Pfam" id="PF04560">
    <property type="entry name" value="RNA_pol_Rpb2_7"/>
    <property type="match status" value="1"/>
</dbReference>
<dbReference type="SUPFAM" id="SSF64484">
    <property type="entry name" value="beta and beta-prime subunits of DNA dependent RNA-polymerase"/>
    <property type="match status" value="1"/>
</dbReference>
<dbReference type="PROSITE" id="PS01166">
    <property type="entry name" value="RNA_POL_BETA"/>
    <property type="match status" value="1"/>
</dbReference>
<reference key="1">
    <citation type="journal article" date="2009" name="Science">
        <title>The dynamics and time scale of ongoing genomic erosion in symbiotic bacteria.</title>
        <authorList>
            <person name="Moran N.A."/>
            <person name="McLaughlin H.J."/>
            <person name="Sorek R."/>
        </authorList>
    </citation>
    <scope>NUCLEOTIDE SEQUENCE [LARGE SCALE GENOMIC DNA]</scope>
    <source>
        <strain>Tuc7</strain>
    </source>
</reference>
<comment type="function">
    <text evidence="1">DNA-dependent RNA polymerase catalyzes the transcription of DNA into RNA using the four ribonucleoside triphosphates as substrates.</text>
</comment>
<comment type="catalytic activity">
    <reaction evidence="1">
        <text>RNA(n) + a ribonucleoside 5'-triphosphate = RNA(n+1) + diphosphate</text>
        <dbReference type="Rhea" id="RHEA:21248"/>
        <dbReference type="Rhea" id="RHEA-COMP:14527"/>
        <dbReference type="Rhea" id="RHEA-COMP:17342"/>
        <dbReference type="ChEBI" id="CHEBI:33019"/>
        <dbReference type="ChEBI" id="CHEBI:61557"/>
        <dbReference type="ChEBI" id="CHEBI:140395"/>
        <dbReference type="EC" id="2.7.7.6"/>
    </reaction>
</comment>
<comment type="subunit">
    <text evidence="1">The RNAP catalytic core consists of 2 alpha, 1 beta, 1 beta' and 1 omega subunit. When a sigma factor is associated with the core the holoenzyme is formed, which can initiate transcription.</text>
</comment>
<comment type="similarity">
    <text evidence="1">Belongs to the RNA polymerase beta chain family.</text>
</comment>
<proteinExistence type="inferred from homology"/>